<keyword id="KW-0479">Metal-binding</keyword>
<keyword id="KW-1185">Reference proteome</keyword>
<keyword id="KW-0677">Repeat</keyword>
<keyword id="KW-0862">Zinc</keyword>
<reference key="1">
    <citation type="submission" date="2004-04" db="EMBL/GenBank/DDBJ databases">
        <authorList>
            <consortium name="NIH - Xenopus Gene Collection (XGC) project"/>
        </authorList>
    </citation>
    <scope>NUCLEOTIDE SEQUENCE [LARGE SCALE MRNA]</scope>
    <source>
        <tissue>Ovary</tissue>
    </source>
</reference>
<evidence type="ECO:0000250" key="1"/>
<evidence type="ECO:0000255" key="2">
    <source>
        <dbReference type="PROSITE-ProRule" id="PRU00547"/>
    </source>
</evidence>
<evidence type="ECO:0000255" key="3">
    <source>
        <dbReference type="PROSITE-ProRule" id="PRU00734"/>
    </source>
</evidence>
<feature type="chain" id="PRO_0000317775" description="Cysteine and histidine-rich domain-containing protein 1">
    <location>
        <begin position="1"/>
        <end position="334"/>
    </location>
</feature>
<feature type="domain" description="CHORD 1" evidence="3">
    <location>
        <begin position="5"/>
        <end position="64"/>
    </location>
</feature>
<feature type="domain" description="CHORD 2" evidence="3">
    <location>
        <begin position="156"/>
        <end position="215"/>
    </location>
</feature>
<feature type="domain" description="CS" evidence="2">
    <location>
        <begin position="226"/>
        <end position="315"/>
    </location>
</feature>
<feature type="binding site" evidence="3">
    <location>
        <position position="5"/>
    </location>
    <ligand>
        <name>Zn(2+)</name>
        <dbReference type="ChEBI" id="CHEBI:29105"/>
        <label>1</label>
    </ligand>
</feature>
<feature type="binding site" evidence="3">
    <location>
        <position position="10"/>
    </location>
    <ligand>
        <name>Zn(2+)</name>
        <dbReference type="ChEBI" id="CHEBI:29105"/>
        <label>1</label>
    </ligand>
</feature>
<feature type="binding site" evidence="3">
    <location>
        <position position="24"/>
    </location>
    <ligand>
        <name>Zn(2+)</name>
        <dbReference type="ChEBI" id="CHEBI:29105"/>
        <label>1</label>
    </ligand>
</feature>
<feature type="binding site" evidence="3">
    <location>
        <position position="27"/>
    </location>
    <ligand>
        <name>Zn(2+)</name>
        <dbReference type="ChEBI" id="CHEBI:29105"/>
        <label>2</label>
    </ligand>
</feature>
<feature type="binding site" evidence="3">
    <location>
        <position position="42"/>
    </location>
    <ligand>
        <name>Zn(2+)</name>
        <dbReference type="ChEBI" id="CHEBI:29105"/>
        <label>2</label>
    </ligand>
</feature>
<feature type="binding site" evidence="3">
    <location>
        <position position="43"/>
    </location>
    <ligand>
        <name>Zn(2+)</name>
        <dbReference type="ChEBI" id="CHEBI:29105"/>
        <label>2</label>
    </ligand>
</feature>
<feature type="binding site" evidence="3">
    <location>
        <position position="59"/>
    </location>
    <ligand>
        <name>Zn(2+)</name>
        <dbReference type="ChEBI" id="CHEBI:29105"/>
        <label>2</label>
    </ligand>
</feature>
<feature type="binding site" evidence="3">
    <location>
        <position position="64"/>
    </location>
    <ligand>
        <name>Zn(2+)</name>
        <dbReference type="ChEBI" id="CHEBI:29105"/>
        <label>1</label>
    </ligand>
</feature>
<feature type="binding site" evidence="3">
    <location>
        <position position="156"/>
    </location>
    <ligand>
        <name>Zn(2+)</name>
        <dbReference type="ChEBI" id="CHEBI:29105"/>
        <label>3</label>
    </ligand>
</feature>
<feature type="binding site" evidence="3">
    <location>
        <position position="161"/>
    </location>
    <ligand>
        <name>Zn(2+)</name>
        <dbReference type="ChEBI" id="CHEBI:29105"/>
        <label>3</label>
    </ligand>
</feature>
<feature type="binding site" evidence="3">
    <location>
        <position position="175"/>
    </location>
    <ligand>
        <name>Zn(2+)</name>
        <dbReference type="ChEBI" id="CHEBI:29105"/>
        <label>3</label>
    </ligand>
</feature>
<feature type="binding site" evidence="3">
    <location>
        <position position="178"/>
    </location>
    <ligand>
        <name>Zn(2+)</name>
        <dbReference type="ChEBI" id="CHEBI:29105"/>
        <label>4</label>
    </ligand>
</feature>
<feature type="binding site" evidence="3">
    <location>
        <position position="193"/>
    </location>
    <ligand>
        <name>Zn(2+)</name>
        <dbReference type="ChEBI" id="CHEBI:29105"/>
        <label>4</label>
    </ligand>
</feature>
<feature type="binding site" evidence="3">
    <location>
        <position position="194"/>
    </location>
    <ligand>
        <name>Zn(2+)</name>
        <dbReference type="ChEBI" id="CHEBI:29105"/>
        <label>4</label>
    </ligand>
</feature>
<feature type="binding site" evidence="3">
    <location>
        <position position="210"/>
    </location>
    <ligand>
        <name>Zn(2+)</name>
        <dbReference type="ChEBI" id="CHEBI:29105"/>
        <label>4</label>
    </ligand>
</feature>
<feature type="binding site" evidence="3">
    <location>
        <position position="215"/>
    </location>
    <ligand>
        <name>Zn(2+)</name>
        <dbReference type="ChEBI" id="CHEBI:29105"/>
        <label>3</label>
    </ligand>
</feature>
<gene>
    <name type="primary">chordc1</name>
</gene>
<organism>
    <name type="scientific">Xenopus laevis</name>
    <name type="common">African clawed frog</name>
    <dbReference type="NCBI Taxonomy" id="8355"/>
    <lineage>
        <taxon>Eukaryota</taxon>
        <taxon>Metazoa</taxon>
        <taxon>Chordata</taxon>
        <taxon>Craniata</taxon>
        <taxon>Vertebrata</taxon>
        <taxon>Euteleostomi</taxon>
        <taxon>Amphibia</taxon>
        <taxon>Batrachia</taxon>
        <taxon>Anura</taxon>
        <taxon>Pipoidea</taxon>
        <taxon>Pipidae</taxon>
        <taxon>Xenopodinae</taxon>
        <taxon>Xenopus</taxon>
        <taxon>Xenopus</taxon>
    </lineage>
</organism>
<name>CHRD1_XENLA</name>
<comment type="function">
    <text evidence="1">Regulates centrosome duplication.</text>
</comment>
<protein>
    <recommendedName>
        <fullName>Cysteine and histidine-rich domain-containing protein 1</fullName>
    </recommendedName>
    <alternativeName>
        <fullName>CHORD domain-containing protein 1</fullName>
    </alternativeName>
    <alternativeName>
        <fullName>Protein morgana</fullName>
    </alternativeName>
</protein>
<dbReference type="EMBL" id="BC068697">
    <property type="protein sequence ID" value="AAH68697.1"/>
    <property type="molecule type" value="mRNA"/>
</dbReference>
<dbReference type="RefSeq" id="NP_001084590.1">
    <property type="nucleotide sequence ID" value="NM_001091121.1"/>
</dbReference>
<dbReference type="SMR" id="Q6NUA0"/>
<dbReference type="DNASU" id="414542"/>
<dbReference type="GeneID" id="414542"/>
<dbReference type="KEGG" id="xla:414542"/>
<dbReference type="AGR" id="Xenbase:XB-GENE-962955"/>
<dbReference type="CTD" id="414542"/>
<dbReference type="Xenbase" id="XB-GENE-962955">
    <property type="gene designation" value="chordc1.S"/>
</dbReference>
<dbReference type="OMA" id="KGYTCCK"/>
<dbReference type="OrthoDB" id="10261079at2759"/>
<dbReference type="Proteomes" id="UP000186698">
    <property type="component" value="Chromosome 2S"/>
</dbReference>
<dbReference type="Bgee" id="414542">
    <property type="expression patterns" value="Expressed in ovary and 19 other cell types or tissues"/>
</dbReference>
<dbReference type="GO" id="GO:0046872">
    <property type="term" value="F:metal ion binding"/>
    <property type="evidence" value="ECO:0007669"/>
    <property type="project" value="UniProtKB-KW"/>
</dbReference>
<dbReference type="GO" id="GO:0010824">
    <property type="term" value="P:regulation of centrosome duplication"/>
    <property type="evidence" value="ECO:0000250"/>
    <property type="project" value="UniProtKB"/>
</dbReference>
<dbReference type="CDD" id="cd06488">
    <property type="entry name" value="p23_melusin_like"/>
    <property type="match status" value="1"/>
</dbReference>
<dbReference type="FunFam" id="2.60.40.790:FF:000017">
    <property type="entry name" value="Cysteine and histidine-rich domain-containing protein 1"/>
    <property type="match status" value="1"/>
</dbReference>
<dbReference type="FunFam" id="4.10.1130.20:FF:000001">
    <property type="entry name" value="Cysteine and histidine-rich domain-containing protein 1"/>
    <property type="match status" value="1"/>
</dbReference>
<dbReference type="FunFam" id="4.10.1130.20:FF:000002">
    <property type="entry name" value="cysteine and histidine-rich domain-containing protein 1"/>
    <property type="match status" value="1"/>
</dbReference>
<dbReference type="Gene3D" id="2.60.40.790">
    <property type="match status" value="1"/>
</dbReference>
<dbReference type="Gene3D" id="4.10.1130.20">
    <property type="match status" value="2"/>
</dbReference>
<dbReference type="InterPro" id="IPR007051">
    <property type="entry name" value="CHORD_dom"/>
</dbReference>
<dbReference type="InterPro" id="IPR039790">
    <property type="entry name" value="CHRD1"/>
</dbReference>
<dbReference type="InterPro" id="IPR007052">
    <property type="entry name" value="CS_dom"/>
</dbReference>
<dbReference type="InterPro" id="IPR008978">
    <property type="entry name" value="HSP20-like_chaperone"/>
</dbReference>
<dbReference type="PANTHER" id="PTHR46983">
    <property type="entry name" value="CYSTEINE AND HISTIDINE-RICH DOMAIN-CONTAINING PROTEIN 1"/>
    <property type="match status" value="1"/>
</dbReference>
<dbReference type="PANTHER" id="PTHR46983:SF4">
    <property type="entry name" value="CYSTEINE AND HISTIDINE-RICH DOMAIN-CONTAINING PROTEIN 1"/>
    <property type="match status" value="1"/>
</dbReference>
<dbReference type="Pfam" id="PF04968">
    <property type="entry name" value="CHORD"/>
    <property type="match status" value="2"/>
</dbReference>
<dbReference type="Pfam" id="PF04969">
    <property type="entry name" value="CS"/>
    <property type="match status" value="1"/>
</dbReference>
<dbReference type="SUPFAM" id="SSF49764">
    <property type="entry name" value="HSP20-like chaperones"/>
    <property type="match status" value="1"/>
</dbReference>
<dbReference type="PROSITE" id="PS51401">
    <property type="entry name" value="CHORD"/>
    <property type="match status" value="2"/>
</dbReference>
<dbReference type="PROSITE" id="PS51203">
    <property type="entry name" value="CS"/>
    <property type="match status" value="1"/>
</dbReference>
<proteinExistence type="evidence at transcript level"/>
<accession>Q6NUA0</accession>
<sequence>MSLLCYNRGCGQRYDPEGNSDDSCTYHPGVPVFHDALKGWSCCKRRTTDFSDFLSIVGCTKGQHNNEKPPEPVKPEVKITSDKKELADFKPKFNELIIQAPKPIECINRPSSDEPMAKLQLKISASLKQALDKLKLSENDKTVTDESGEIKIGTSCKNGGCLKTFAGPQSNEEVCHYHSGVPIFHEGMKYWSCCRRKTSDFNTFLSLEGCTKGTHLWTKKDDGKKVVPCRHDWHQTGAGVTISIYAKNSMPELSYVEANSTVVNIQVVFEGEKTFQQNVQLWGVIDVAKSYVSLTATKVEVFLKKAEFMTWARLELPQKAPAPSEQNETPEEQE</sequence>